<comment type="function">
    <text evidence="2">Component of the chaperonin-containing T-complex (TRiC), a molecular chaperone complex that assists the folding of actin, tubulin and other proteins upon ATP hydrolysis. The TRiC complex mediates the folding of WRAP53/TCAB1, thereby regulating telomere maintenance. As part of the TRiC complex may play a role in the assembly of BBSome, a complex involved in ciliogenesis regulating transports vesicles to the cilia.</text>
</comment>
<comment type="catalytic activity">
    <reaction evidence="2">
        <text>ATP + H2O = ADP + phosphate + H(+)</text>
        <dbReference type="Rhea" id="RHEA:13065"/>
        <dbReference type="ChEBI" id="CHEBI:15377"/>
        <dbReference type="ChEBI" id="CHEBI:15378"/>
        <dbReference type="ChEBI" id="CHEBI:30616"/>
        <dbReference type="ChEBI" id="CHEBI:43474"/>
        <dbReference type="ChEBI" id="CHEBI:456216"/>
    </reaction>
</comment>
<comment type="subunit">
    <text evidence="1 2">Component of the chaperonin-containing T-complex (TRiC), a hexadecamer composed of two identical back-to-back stacked rings enclosing a protein folding chamber. Each ring is made up of eight different subunits: TCP1/CCT1, CCT2, CCT3, CCT4, CCT5, CCT6A/CCT6, CCT7, CCT8. Interacts with PACRG (By similarity). Interacts with DNAAF4 (By similarity). Interacts with synaptic plasticity regulator PANTS (By similarity).</text>
</comment>
<comment type="subcellular location">
    <subcellularLocation>
        <location evidence="2">Cytoplasm</location>
    </subcellularLocation>
    <subcellularLocation>
        <location evidence="2">Cytoplasm</location>
        <location evidence="2">Cytoskeleton</location>
        <location evidence="2">Microtubule organizing center</location>
        <location evidence="2">Centrosome</location>
    </subcellularLocation>
    <subcellularLocation>
        <location evidence="1">Cytoplasm</location>
        <location evidence="1">Cytoskeleton</location>
        <location evidence="1">Cilium basal body</location>
    </subcellularLocation>
</comment>
<comment type="similarity">
    <text evidence="4">Belongs to the TCP-1 chaperonin family.</text>
</comment>
<proteinExistence type="evidence at protein level"/>
<accession>Q3ZCI9</accession>
<organism>
    <name type="scientific">Bos taurus</name>
    <name type="common">Bovine</name>
    <dbReference type="NCBI Taxonomy" id="9913"/>
    <lineage>
        <taxon>Eukaryota</taxon>
        <taxon>Metazoa</taxon>
        <taxon>Chordata</taxon>
        <taxon>Craniata</taxon>
        <taxon>Vertebrata</taxon>
        <taxon>Euteleostomi</taxon>
        <taxon>Mammalia</taxon>
        <taxon>Eutheria</taxon>
        <taxon>Laurasiatheria</taxon>
        <taxon>Artiodactyla</taxon>
        <taxon>Ruminantia</taxon>
        <taxon>Pecora</taxon>
        <taxon>Bovidae</taxon>
        <taxon>Bovinae</taxon>
        <taxon>Bos</taxon>
    </lineage>
</organism>
<reference key="1">
    <citation type="submission" date="2005-08" db="EMBL/GenBank/DDBJ databases">
        <authorList>
            <consortium name="NIH - Mammalian Gene Collection (MGC) project"/>
        </authorList>
    </citation>
    <scope>NUCLEOTIDE SEQUENCE [LARGE SCALE MRNA]</scope>
    <source>
        <strain>Crossbred X Angus</strain>
        <tissue>Ileum</tissue>
    </source>
</reference>
<sequence length="548" mass="59609">MALHVPKAPGFAQMLKEGAKHFSGLEEAVYRNIQACKELAQTTRTAYGPNGMNKMVINHLEKLFVTNDAATILRELEVQHPAAKMIVMASHMQEQEVGDGTNFVLVFAGALLELAEELLRLGLSVSEVIEGYEIACKKAHEILPDLVCCSAKNLRDVDEVSSLLHTSVMSKQYGNEVFLAKLIAQACVSIFPDSGHFNVDNIRVCKILGSGVHSSSVLHGMVFKKETEGDVTSVKDAKIAVYSCPFDGMITETKGTVLIKSAEELMNFSKGEENLMDAQVKAIADTGANVVVTGGRVADMALHYANKYNIMLVRLNSKWDLRRLCKTVGATALPRLNPPVLEEMGHCDSVYLSEVGDTQVVVFKHEKEDGAISTIVLRGSTDNLMDDIERAVDDGVNTFKVLTRDKRLVPGGGATEIELAKQITSYGETCPGLEQYAIKKFAEAFEAIPRALAENSGVKANEVISKLYAVHQEGNKNVGLDIEAEVPAVKDMLEAGVLDTYLGKYWAIKLATNAAVTVLRVDQIIMAKPAGGPKPPSGKKDWDEDQND</sequence>
<keyword id="KW-0002">3D-structure</keyword>
<keyword id="KW-0007">Acetylation</keyword>
<keyword id="KW-0067">ATP-binding</keyword>
<keyword id="KW-0966">Cell projection</keyword>
<keyword id="KW-0143">Chaperone</keyword>
<keyword id="KW-0969">Cilium</keyword>
<keyword id="KW-0963">Cytoplasm</keyword>
<keyword id="KW-0206">Cytoskeleton</keyword>
<keyword id="KW-0378">Hydrolase</keyword>
<keyword id="KW-1017">Isopeptide bond</keyword>
<keyword id="KW-0460">Magnesium</keyword>
<keyword id="KW-0479">Metal-binding</keyword>
<keyword id="KW-0547">Nucleotide-binding</keyword>
<keyword id="KW-0597">Phosphoprotein</keyword>
<keyword id="KW-1185">Reference proteome</keyword>
<keyword id="KW-0832">Ubl conjugation</keyword>
<gene>
    <name type="primary">CCT8</name>
</gene>
<feature type="initiator methionine" description="Removed" evidence="2">
    <location>
        <position position="1"/>
    </location>
</feature>
<feature type="chain" id="PRO_0000236265" description="T-complex protein 1 subunit theta">
    <location>
        <begin position="2"/>
        <end position="548"/>
    </location>
</feature>
<feature type="region of interest" description="Disordered" evidence="3">
    <location>
        <begin position="529"/>
        <end position="548"/>
    </location>
</feature>
<feature type="binding site" evidence="2">
    <location>
        <position position="47"/>
    </location>
    <ligand>
        <name>ADP</name>
        <dbReference type="ChEBI" id="CHEBI:456216"/>
    </ligand>
</feature>
<feature type="binding site" evidence="2">
    <location>
        <position position="48"/>
    </location>
    <ligand>
        <name>ADP</name>
        <dbReference type="ChEBI" id="CHEBI:456216"/>
    </ligand>
</feature>
<feature type="binding site" evidence="2">
    <location>
        <position position="99"/>
    </location>
    <ligand>
        <name>Mg(2+)</name>
        <dbReference type="ChEBI" id="CHEBI:18420"/>
    </ligand>
</feature>
<feature type="binding site" evidence="2">
    <location>
        <position position="100"/>
    </location>
    <ligand>
        <name>ADP</name>
        <dbReference type="ChEBI" id="CHEBI:456216"/>
    </ligand>
</feature>
<feature type="binding site" evidence="2">
    <location>
        <position position="100"/>
    </location>
    <ligand>
        <name>ATP</name>
        <dbReference type="ChEBI" id="CHEBI:30616"/>
    </ligand>
</feature>
<feature type="binding site" evidence="2">
    <location>
        <position position="101"/>
    </location>
    <ligand>
        <name>ADP</name>
        <dbReference type="ChEBI" id="CHEBI:456216"/>
    </ligand>
</feature>
<feature type="binding site" evidence="2">
    <location>
        <position position="101"/>
    </location>
    <ligand>
        <name>ATP</name>
        <dbReference type="ChEBI" id="CHEBI:30616"/>
    </ligand>
</feature>
<feature type="binding site" evidence="2">
    <location>
        <position position="102"/>
    </location>
    <ligand>
        <name>ADP</name>
        <dbReference type="ChEBI" id="CHEBI:456216"/>
    </ligand>
</feature>
<feature type="binding site" evidence="2">
    <location>
        <position position="102"/>
    </location>
    <ligand>
        <name>ATP</name>
        <dbReference type="ChEBI" id="CHEBI:30616"/>
    </ligand>
</feature>
<feature type="binding site" evidence="2">
    <location>
        <position position="103"/>
    </location>
    <ligand>
        <name>ADP</name>
        <dbReference type="ChEBI" id="CHEBI:456216"/>
    </ligand>
</feature>
<feature type="binding site" evidence="2">
    <location>
        <position position="169"/>
    </location>
    <ligand>
        <name>ADP</name>
        <dbReference type="ChEBI" id="CHEBI:456216"/>
    </ligand>
</feature>
<feature type="binding site" evidence="2">
    <location>
        <position position="170"/>
    </location>
    <ligand>
        <name>ADP</name>
        <dbReference type="ChEBI" id="CHEBI:456216"/>
    </ligand>
</feature>
<feature type="binding site" evidence="2">
    <location>
        <position position="170"/>
    </location>
    <ligand>
        <name>ATP</name>
        <dbReference type="ChEBI" id="CHEBI:30616"/>
    </ligand>
</feature>
<feature type="binding site" evidence="2">
    <location>
        <position position="171"/>
    </location>
    <ligand>
        <name>ADP</name>
        <dbReference type="ChEBI" id="CHEBI:456216"/>
    </ligand>
</feature>
<feature type="binding site" evidence="2">
    <location>
        <position position="171"/>
    </location>
    <ligand>
        <name>ATP</name>
        <dbReference type="ChEBI" id="CHEBI:30616"/>
    </ligand>
</feature>
<feature type="binding site" evidence="2">
    <location>
        <position position="412"/>
    </location>
    <ligand>
        <name>ADP</name>
        <dbReference type="ChEBI" id="CHEBI:456216"/>
    </ligand>
</feature>
<feature type="binding site" evidence="2">
    <location>
        <position position="412"/>
    </location>
    <ligand>
        <name>ATP</name>
        <dbReference type="ChEBI" id="CHEBI:30616"/>
    </ligand>
</feature>
<feature type="binding site" evidence="2">
    <location>
        <position position="499"/>
    </location>
    <ligand>
        <name>ADP</name>
        <dbReference type="ChEBI" id="CHEBI:456216"/>
    </ligand>
</feature>
<feature type="binding site" evidence="2">
    <location>
        <position position="499"/>
    </location>
    <ligand>
        <name>ATP</name>
        <dbReference type="ChEBI" id="CHEBI:30616"/>
    </ligand>
</feature>
<feature type="binding site" evidence="2">
    <location>
        <position position="504"/>
    </location>
    <ligand>
        <name>ATP</name>
        <dbReference type="ChEBI" id="CHEBI:30616"/>
    </ligand>
</feature>
<feature type="modified residue" description="N-acetylalanine" evidence="2">
    <location>
        <position position="2"/>
    </location>
</feature>
<feature type="modified residue" description="Phosphoserine" evidence="2">
    <location>
        <position position="23"/>
    </location>
</feature>
<feature type="modified residue" description="Phosphotyrosine" evidence="2">
    <location>
        <position position="30"/>
    </location>
</feature>
<feature type="modified residue" description="Phosphoserine" evidence="2">
    <location>
        <position position="162"/>
    </location>
</feature>
<feature type="modified residue" description="Phosphoserine" evidence="2">
    <location>
        <position position="269"/>
    </location>
</feature>
<feature type="modified residue" description="Phosphoserine" evidence="2">
    <location>
        <position position="317"/>
    </location>
</feature>
<feature type="modified residue" description="N6-acetyllysine" evidence="2">
    <location>
        <position position="318"/>
    </location>
</feature>
<feature type="modified residue" description="N6-acetyllysine" evidence="2">
    <location>
        <position position="400"/>
    </location>
</feature>
<feature type="modified residue" description="N6-acetyllysine" evidence="2">
    <location>
        <position position="466"/>
    </location>
</feature>
<feature type="modified residue" description="Phosphotyrosine" evidence="2">
    <location>
        <position position="505"/>
    </location>
</feature>
<feature type="modified residue" description="Phosphoserine" evidence="2">
    <location>
        <position position="537"/>
    </location>
</feature>
<feature type="cross-link" description="Glycyl lysine isopeptide (Lys-Gly) (interchain with G-Cter in SUMO2)" evidence="2">
    <location>
        <position position="224"/>
    </location>
</feature>
<feature type="cross-link" description="Glycyl lysine isopeptide (Lys-Gly) (interchain with G-Cter in SUMO2)" evidence="2">
    <location>
        <position position="254"/>
    </location>
</feature>
<feature type="cross-link" description="Glycyl lysine isopeptide (Lys-Gly) (interchain with G-Cter in SUMO2)" evidence="2">
    <location>
        <position position="260"/>
    </location>
</feature>
<feature type="cross-link" description="Glycyl lysine isopeptide (Lys-Gly) (interchain with G-Cter in SUMO1)" evidence="2">
    <location>
        <position position="459"/>
    </location>
</feature>
<feature type="cross-link" description="Glycyl lysine isopeptide (Lys-Gly) (interchain with G-Cter in SUMO2)" evidence="2">
    <location>
        <position position="534"/>
    </location>
</feature>
<feature type="cross-link" description="Glycyl lysine isopeptide (Lys-Gly) (interchain with G-Cter in SUMO2)" evidence="2">
    <location>
        <position position="539"/>
    </location>
</feature>
<name>TCPQ_BOVIN</name>
<dbReference type="EC" id="3.6.1.-" evidence="2"/>
<dbReference type="EMBL" id="BC102169">
    <property type="protein sequence ID" value="AAI02170.1"/>
    <property type="molecule type" value="mRNA"/>
</dbReference>
<dbReference type="RefSeq" id="NP_001028781.1">
    <property type="nucleotide sequence ID" value="NM_001033609.1"/>
</dbReference>
<dbReference type="PDB" id="3IYG">
    <property type="method" value="EM"/>
    <property type="chains" value="Q=17-528"/>
</dbReference>
<dbReference type="PDB" id="4B2T">
    <property type="method" value="X-ray"/>
    <property type="resolution" value="5.50 A"/>
    <property type="chains" value="Q/q=1-548"/>
</dbReference>
<dbReference type="PDBsum" id="3IYG"/>
<dbReference type="PDBsum" id="4B2T"/>
<dbReference type="EMDB" id="EMD-50664"/>
<dbReference type="SMR" id="Q3ZCI9"/>
<dbReference type="BioGRID" id="158417">
    <property type="interactions" value="4"/>
</dbReference>
<dbReference type="CORUM" id="Q3ZCI9"/>
<dbReference type="DIP" id="DIP-58622N"/>
<dbReference type="FunCoup" id="Q3ZCI9">
    <property type="interactions" value="3879"/>
</dbReference>
<dbReference type="IntAct" id="Q3ZCI9">
    <property type="interactions" value="2"/>
</dbReference>
<dbReference type="STRING" id="9913.ENSBTAP00000018917"/>
<dbReference type="PaxDb" id="9913-ENSBTAP00000018917"/>
<dbReference type="PeptideAtlas" id="Q3ZCI9"/>
<dbReference type="Ensembl" id="ENSBTAT00000018917.3">
    <property type="protein sequence ID" value="ENSBTAP00000018917.2"/>
    <property type="gene ID" value="ENSBTAG00000014233.4"/>
</dbReference>
<dbReference type="GeneID" id="281047"/>
<dbReference type="KEGG" id="bta:281047"/>
<dbReference type="CTD" id="10694"/>
<dbReference type="VEuPathDB" id="HostDB:ENSBTAG00000014233"/>
<dbReference type="eggNOG" id="KOG0362">
    <property type="taxonomic scope" value="Eukaryota"/>
</dbReference>
<dbReference type="GeneTree" id="ENSGT00550000074783"/>
<dbReference type="HOGENOM" id="CLU_008891_4_2_1"/>
<dbReference type="InParanoid" id="Q3ZCI9"/>
<dbReference type="OMA" id="WGLKYAV"/>
<dbReference type="OrthoDB" id="1748577at2759"/>
<dbReference type="TreeFam" id="TF105699"/>
<dbReference type="BRENDA" id="3.6.4.B10">
    <property type="organism ID" value="908"/>
</dbReference>
<dbReference type="Reactome" id="R-BTA-390471">
    <property type="pathway name" value="Association of TriC/CCT with target proteins during biosynthesis"/>
</dbReference>
<dbReference type="Reactome" id="R-BTA-6798695">
    <property type="pathway name" value="Neutrophil degranulation"/>
</dbReference>
<dbReference type="Reactome" id="R-BTA-6814122">
    <property type="pathway name" value="Cooperation of PDCL (PhLP1) and TRiC/CCT in G-protein beta folding"/>
</dbReference>
<dbReference type="EvolutionaryTrace" id="Q3ZCI9"/>
<dbReference type="Proteomes" id="UP000009136">
    <property type="component" value="Chromosome 1"/>
</dbReference>
<dbReference type="Bgee" id="ENSBTAG00000014233">
    <property type="expression patterns" value="Expressed in oocyte and 103 other cell types or tissues"/>
</dbReference>
<dbReference type="GO" id="GO:0005813">
    <property type="term" value="C:centrosome"/>
    <property type="evidence" value="ECO:0007669"/>
    <property type="project" value="UniProtKB-SubCell"/>
</dbReference>
<dbReference type="GO" id="GO:0005832">
    <property type="term" value="C:chaperonin-containing T-complex"/>
    <property type="evidence" value="ECO:0000314"/>
    <property type="project" value="UniProtKB"/>
</dbReference>
<dbReference type="GO" id="GO:0005929">
    <property type="term" value="C:cilium"/>
    <property type="evidence" value="ECO:0007669"/>
    <property type="project" value="UniProtKB-KW"/>
</dbReference>
<dbReference type="GO" id="GO:0005524">
    <property type="term" value="F:ATP binding"/>
    <property type="evidence" value="ECO:0007669"/>
    <property type="project" value="UniProtKB-KW"/>
</dbReference>
<dbReference type="GO" id="GO:0016887">
    <property type="term" value="F:ATP hydrolysis activity"/>
    <property type="evidence" value="ECO:0007669"/>
    <property type="project" value="InterPro"/>
</dbReference>
<dbReference type="GO" id="GO:0140662">
    <property type="term" value="F:ATP-dependent protein folding chaperone"/>
    <property type="evidence" value="ECO:0007669"/>
    <property type="project" value="InterPro"/>
</dbReference>
<dbReference type="GO" id="GO:0051082">
    <property type="term" value="F:unfolded protein binding"/>
    <property type="evidence" value="ECO:0000318"/>
    <property type="project" value="GO_Central"/>
</dbReference>
<dbReference type="GO" id="GO:0006457">
    <property type="term" value="P:protein folding"/>
    <property type="evidence" value="ECO:0000318"/>
    <property type="project" value="GO_Central"/>
</dbReference>
<dbReference type="CDD" id="cd03341">
    <property type="entry name" value="TCP1_theta"/>
    <property type="match status" value="1"/>
</dbReference>
<dbReference type="FunFam" id="1.10.560.10:FF:000083">
    <property type="entry name" value="T-complex protein 1 subunit theta"/>
    <property type="match status" value="1"/>
</dbReference>
<dbReference type="FunFam" id="3.50.7.10:FF:000008">
    <property type="entry name" value="T-complex protein 1 subunit theta"/>
    <property type="match status" value="1"/>
</dbReference>
<dbReference type="Gene3D" id="3.50.7.10">
    <property type="entry name" value="GroEL"/>
    <property type="match status" value="1"/>
</dbReference>
<dbReference type="Gene3D" id="1.10.560.10">
    <property type="entry name" value="GroEL-like equatorial domain"/>
    <property type="match status" value="1"/>
</dbReference>
<dbReference type="Gene3D" id="3.30.260.10">
    <property type="entry name" value="TCP-1-like chaperonin intermediate domain"/>
    <property type="match status" value="1"/>
</dbReference>
<dbReference type="InterPro" id="IPR012721">
    <property type="entry name" value="Chap_CCT_theta"/>
</dbReference>
<dbReference type="InterPro" id="IPR017998">
    <property type="entry name" value="Chaperone_TCP-1"/>
</dbReference>
<dbReference type="InterPro" id="IPR002194">
    <property type="entry name" value="Chaperonin_TCP-1_CS"/>
</dbReference>
<dbReference type="InterPro" id="IPR002423">
    <property type="entry name" value="Cpn60/GroEL/TCP-1"/>
</dbReference>
<dbReference type="InterPro" id="IPR027409">
    <property type="entry name" value="GroEL-like_apical_dom_sf"/>
</dbReference>
<dbReference type="InterPro" id="IPR027413">
    <property type="entry name" value="GROEL-like_equatorial_sf"/>
</dbReference>
<dbReference type="InterPro" id="IPR027410">
    <property type="entry name" value="TCP-1-like_intermed_sf"/>
</dbReference>
<dbReference type="NCBIfam" id="TIGR02346">
    <property type="entry name" value="chap_CCT_theta"/>
    <property type="match status" value="1"/>
</dbReference>
<dbReference type="PANTHER" id="PTHR11353">
    <property type="entry name" value="CHAPERONIN"/>
    <property type="match status" value="1"/>
</dbReference>
<dbReference type="Pfam" id="PF00118">
    <property type="entry name" value="Cpn60_TCP1"/>
    <property type="match status" value="1"/>
</dbReference>
<dbReference type="PRINTS" id="PR00304">
    <property type="entry name" value="TCOMPLEXTCP1"/>
</dbReference>
<dbReference type="SUPFAM" id="SSF52029">
    <property type="entry name" value="GroEL apical domain-like"/>
    <property type="match status" value="1"/>
</dbReference>
<dbReference type="SUPFAM" id="SSF48592">
    <property type="entry name" value="GroEL equatorial domain-like"/>
    <property type="match status" value="1"/>
</dbReference>
<dbReference type="SUPFAM" id="SSF54849">
    <property type="entry name" value="GroEL-intermediate domain like"/>
    <property type="match status" value="1"/>
</dbReference>
<dbReference type="PROSITE" id="PS00750">
    <property type="entry name" value="TCP1_1"/>
    <property type="match status" value="1"/>
</dbReference>
<dbReference type="PROSITE" id="PS00751">
    <property type="entry name" value="TCP1_2"/>
    <property type="match status" value="1"/>
</dbReference>
<dbReference type="PROSITE" id="PS00995">
    <property type="entry name" value="TCP1_3"/>
    <property type="match status" value="1"/>
</dbReference>
<evidence type="ECO:0000250" key="1">
    <source>
        <dbReference type="UniProtKB" id="P42932"/>
    </source>
</evidence>
<evidence type="ECO:0000250" key="2">
    <source>
        <dbReference type="UniProtKB" id="P50990"/>
    </source>
</evidence>
<evidence type="ECO:0000256" key="3">
    <source>
        <dbReference type="SAM" id="MobiDB-lite"/>
    </source>
</evidence>
<evidence type="ECO:0000305" key="4"/>
<protein>
    <recommendedName>
        <fullName>T-complex protein 1 subunit theta</fullName>
        <shortName>TCP-1-theta</shortName>
        <ecNumber evidence="2">3.6.1.-</ecNumber>
    </recommendedName>
    <alternativeName>
        <fullName>CCT-theta</fullName>
    </alternativeName>
</protein>